<dbReference type="EMBL" id="LT708304">
    <property type="protein sequence ID" value="SIU00921.1"/>
    <property type="molecule type" value="Genomic_DNA"/>
</dbReference>
<dbReference type="RefSeq" id="NP_855958.1">
    <property type="nucleotide sequence ID" value="NC_002945.3"/>
</dbReference>
<dbReference type="SMR" id="P65527"/>
<dbReference type="KEGG" id="mbo:BQ2027_MB2309"/>
<dbReference type="PATRIC" id="fig|233413.5.peg.2534"/>
<dbReference type="Proteomes" id="UP000001419">
    <property type="component" value="Chromosome"/>
</dbReference>
<dbReference type="GO" id="GO:0005886">
    <property type="term" value="C:plasma membrane"/>
    <property type="evidence" value="ECO:0007669"/>
    <property type="project" value="UniProtKB-SubCell"/>
</dbReference>
<dbReference type="GO" id="GO:0015386">
    <property type="term" value="F:potassium:proton antiporter activity"/>
    <property type="evidence" value="ECO:0007669"/>
    <property type="project" value="TreeGrafter"/>
</dbReference>
<dbReference type="GO" id="GO:0015385">
    <property type="term" value="F:sodium:proton antiporter activity"/>
    <property type="evidence" value="ECO:0007669"/>
    <property type="project" value="InterPro"/>
</dbReference>
<dbReference type="GO" id="GO:0051453">
    <property type="term" value="P:regulation of intracellular pH"/>
    <property type="evidence" value="ECO:0007669"/>
    <property type="project" value="TreeGrafter"/>
</dbReference>
<dbReference type="GO" id="GO:0098719">
    <property type="term" value="P:sodium ion import across plasma membrane"/>
    <property type="evidence" value="ECO:0007669"/>
    <property type="project" value="TreeGrafter"/>
</dbReference>
<dbReference type="Gene3D" id="6.10.140.1330">
    <property type="match status" value="1"/>
</dbReference>
<dbReference type="InterPro" id="IPR018422">
    <property type="entry name" value="Cation/H_exchanger_CPA1"/>
</dbReference>
<dbReference type="InterPro" id="IPR004705">
    <property type="entry name" value="Cation/H_exchanger_CPA1_bac"/>
</dbReference>
<dbReference type="InterPro" id="IPR006153">
    <property type="entry name" value="Cation/H_exchanger_TM"/>
</dbReference>
<dbReference type="NCBIfam" id="TIGR00831">
    <property type="entry name" value="a_cpa1"/>
    <property type="match status" value="1"/>
</dbReference>
<dbReference type="PANTHER" id="PTHR10110">
    <property type="entry name" value="SODIUM/HYDROGEN EXCHANGER"/>
    <property type="match status" value="1"/>
</dbReference>
<dbReference type="PANTHER" id="PTHR10110:SF86">
    <property type="entry name" value="SODIUM_HYDROGEN EXCHANGER 7"/>
    <property type="match status" value="1"/>
</dbReference>
<dbReference type="Pfam" id="PF00999">
    <property type="entry name" value="Na_H_Exchanger"/>
    <property type="match status" value="1"/>
</dbReference>
<sequence length="542" mass="57491">MNGRRTIGEDGLVFGLVVIVALVAAVVVGTVLGHRYRVGPPVLLILSGSLLGLIPRFGDVQIDGEVVLLLFLPAILYWESMNTSFREIRWNLRVIVMFSIGLVIATAVAVSWTARALGMESHAAAVLGAVLSPTDAAAVAGLAKRLPRRALTVLRGESLINDGTALVLFAVTVAVAEGAAGIGPAALVGRFVVSYLGGIMAGLLVGGLVTLLRRRIDAPLEEGALSLLTPFAAFLLAQSLKCSGVVAVLVSALVLTYVGPTVIRARSRLQAHAFWDIATFLINGSLWVFVGVQIPGAIDHIAGEDGGLPRATVLALAVTGVVIATRIAWVQATTVLGHTVDRVLKKPTRHVGFRQRCVTSWAGFRGAVSLAAALAVPMTTNSGAPFPDRNLIIFVVSVVILVTVLVQGTSLPTVVRWARMPEDVAHANELQLARTRSAQAALDALPTVADELGVAPDLVKHLEKEYEERAVLVMADGADSATSDLAERNDLVRRVRLGVLQHQRQAVTTLRNQNLIDDIVLRELQAAMDLEEVQLLDPADAE</sequence>
<comment type="subcellular location">
    <subcellularLocation>
        <location evidence="2">Cell membrane</location>
        <topology evidence="2">Multi-pass membrane protein</topology>
    </subcellularLocation>
</comment>
<comment type="similarity">
    <text evidence="2">Belongs to the monovalent cation:proton antiporter 1 (CPA1) transporter (TC 2.A.36) family.</text>
</comment>
<organism>
    <name type="scientific">Mycobacterium bovis (strain ATCC BAA-935 / AF2122/97)</name>
    <dbReference type="NCBI Taxonomy" id="233413"/>
    <lineage>
        <taxon>Bacteria</taxon>
        <taxon>Bacillati</taxon>
        <taxon>Actinomycetota</taxon>
        <taxon>Actinomycetes</taxon>
        <taxon>Mycobacteriales</taxon>
        <taxon>Mycobacteriaceae</taxon>
        <taxon>Mycobacterium</taxon>
        <taxon>Mycobacterium tuberculosis complex</taxon>
    </lineage>
</organism>
<protein>
    <recommendedName>
        <fullName>Uncharacterized Na(+)/H(+) exchanger Mb2309</fullName>
    </recommendedName>
</protein>
<gene>
    <name type="ordered locus">BQ2027_MB2309</name>
</gene>
<reference key="1">
    <citation type="journal article" date="2003" name="Proc. Natl. Acad. Sci. U.S.A.">
        <title>The complete genome sequence of Mycobacterium bovis.</title>
        <authorList>
            <person name="Garnier T."/>
            <person name="Eiglmeier K."/>
            <person name="Camus J.-C."/>
            <person name="Medina N."/>
            <person name="Mansoor H."/>
            <person name="Pryor M."/>
            <person name="Duthoy S."/>
            <person name="Grondin S."/>
            <person name="Lacroix C."/>
            <person name="Monsempe C."/>
            <person name="Simon S."/>
            <person name="Harris B."/>
            <person name="Atkin R."/>
            <person name="Doggett J."/>
            <person name="Mayes R."/>
            <person name="Keating L."/>
            <person name="Wheeler P.R."/>
            <person name="Parkhill J."/>
            <person name="Barrell B.G."/>
            <person name="Cole S.T."/>
            <person name="Gordon S.V."/>
            <person name="Hewinson R.G."/>
        </authorList>
    </citation>
    <scope>NUCLEOTIDE SEQUENCE [LARGE SCALE GENOMIC DNA]</scope>
    <source>
        <strain>ATCC BAA-935 / AF2122/97</strain>
    </source>
</reference>
<reference key="2">
    <citation type="journal article" date="2017" name="Genome Announc.">
        <title>Updated reference genome sequence and annotation of Mycobacterium bovis AF2122/97.</title>
        <authorList>
            <person name="Malone K.M."/>
            <person name="Farrell D."/>
            <person name="Stuber T.P."/>
            <person name="Schubert O.T."/>
            <person name="Aebersold R."/>
            <person name="Robbe-Austerman S."/>
            <person name="Gordon S.V."/>
        </authorList>
    </citation>
    <scope>NUCLEOTIDE SEQUENCE [LARGE SCALE GENOMIC DNA]</scope>
    <scope>GENOME REANNOTATION</scope>
    <source>
        <strain>ATCC BAA-935 / AF2122/97</strain>
    </source>
</reference>
<proteinExistence type="inferred from homology"/>
<feature type="chain" id="PRO_0000052401" description="Uncharacterized Na(+)/H(+) exchanger Mb2309">
    <location>
        <begin position="1"/>
        <end position="542"/>
    </location>
</feature>
<feature type="transmembrane region" description="Helical" evidence="1">
    <location>
        <begin position="12"/>
        <end position="32"/>
    </location>
</feature>
<feature type="transmembrane region" description="Helical" evidence="1">
    <location>
        <begin position="57"/>
        <end position="77"/>
    </location>
</feature>
<feature type="transmembrane region" description="Helical" evidence="1">
    <location>
        <begin position="94"/>
        <end position="114"/>
    </location>
</feature>
<feature type="transmembrane region" description="Helical" evidence="1">
    <location>
        <begin position="123"/>
        <end position="143"/>
    </location>
</feature>
<feature type="transmembrane region" description="Helical" evidence="1">
    <location>
        <begin position="168"/>
        <end position="188"/>
    </location>
</feature>
<feature type="transmembrane region" description="Helical" evidence="1">
    <location>
        <begin position="191"/>
        <end position="211"/>
    </location>
</feature>
<feature type="transmembrane region" description="Helical" evidence="1">
    <location>
        <begin position="216"/>
        <end position="236"/>
    </location>
</feature>
<feature type="transmembrane region" description="Helical" evidence="1">
    <location>
        <begin position="243"/>
        <end position="263"/>
    </location>
</feature>
<feature type="transmembrane region" description="Helical" evidence="1">
    <location>
        <begin position="277"/>
        <end position="297"/>
    </location>
</feature>
<feature type="transmembrane region" description="Helical" evidence="1">
    <location>
        <begin position="313"/>
        <end position="333"/>
    </location>
</feature>
<feature type="transmembrane region" description="Helical" evidence="1">
    <location>
        <begin position="358"/>
        <end position="378"/>
    </location>
</feature>
<feature type="transmembrane region" description="Helical" evidence="1">
    <location>
        <begin position="391"/>
        <end position="411"/>
    </location>
</feature>
<keyword id="KW-0050">Antiport</keyword>
<keyword id="KW-1003">Cell membrane</keyword>
<keyword id="KW-0406">Ion transport</keyword>
<keyword id="KW-0472">Membrane</keyword>
<keyword id="KW-1185">Reference proteome</keyword>
<keyword id="KW-0915">Sodium</keyword>
<keyword id="KW-0739">Sodium transport</keyword>
<keyword id="KW-0812">Transmembrane</keyword>
<keyword id="KW-1133">Transmembrane helix</keyword>
<keyword id="KW-0813">Transport</keyword>
<accession>P65527</accession>
<accession>A0A1R3Y0R6</accession>
<accession>Q50678</accession>
<accession>X2BJV4</accession>
<name>Y2309_MYCBO</name>
<evidence type="ECO:0000255" key="1"/>
<evidence type="ECO:0000305" key="2"/>